<dbReference type="EMBL" id="CR760684">
    <property type="protein sequence ID" value="CAJ83693.1"/>
    <property type="molecule type" value="mRNA"/>
</dbReference>
<dbReference type="EMBL" id="BC080349">
    <property type="protein sequence ID" value="AAH80349.1"/>
    <property type="molecule type" value="mRNA"/>
</dbReference>
<dbReference type="RefSeq" id="NP_001007911.1">
    <property type="nucleotide sequence ID" value="NM_001007910.2"/>
</dbReference>
<dbReference type="SMR" id="Q66KK8"/>
<dbReference type="FunCoup" id="Q66KK8">
    <property type="interactions" value="2123"/>
</dbReference>
<dbReference type="STRING" id="8364.ENSXETP00000054325"/>
<dbReference type="PaxDb" id="8364-ENSXETP00000017194"/>
<dbReference type="DNASU" id="493293"/>
<dbReference type="GeneID" id="493293"/>
<dbReference type="KEGG" id="xtr:493293"/>
<dbReference type="AGR" id="Xenbase:XB-GENE-486694"/>
<dbReference type="CTD" id="23462"/>
<dbReference type="Xenbase" id="XB-GENE-486694">
    <property type="gene designation" value="hey1"/>
</dbReference>
<dbReference type="eggNOG" id="KOG4304">
    <property type="taxonomic scope" value="Eukaryota"/>
</dbReference>
<dbReference type="HOGENOM" id="CLU_048294_2_0_1"/>
<dbReference type="InParanoid" id="Q66KK8"/>
<dbReference type="OMA" id="QIPWGGA"/>
<dbReference type="OrthoDB" id="6371181at2759"/>
<dbReference type="PhylomeDB" id="Q66KK8"/>
<dbReference type="Proteomes" id="UP000008143">
    <property type="component" value="Chromosome 6"/>
</dbReference>
<dbReference type="Bgee" id="ENSXETG00000007864">
    <property type="expression patterns" value="Expressed in neurula embryo and 34 other cell types or tissues"/>
</dbReference>
<dbReference type="GO" id="GO:0005634">
    <property type="term" value="C:nucleus"/>
    <property type="evidence" value="ECO:0000250"/>
    <property type="project" value="UniProtKB"/>
</dbReference>
<dbReference type="GO" id="GO:0046982">
    <property type="term" value="F:protein heterodimerization activity"/>
    <property type="evidence" value="ECO:0000250"/>
    <property type="project" value="UniProtKB"/>
</dbReference>
<dbReference type="GO" id="GO:0042803">
    <property type="term" value="F:protein homodimerization activity"/>
    <property type="evidence" value="ECO:0000250"/>
    <property type="project" value="UniProtKB"/>
</dbReference>
<dbReference type="GO" id="GO:0043565">
    <property type="term" value="F:sequence-specific DNA binding"/>
    <property type="evidence" value="ECO:0000250"/>
    <property type="project" value="UniProtKB"/>
</dbReference>
<dbReference type="GO" id="GO:0033504">
    <property type="term" value="P:floor plate development"/>
    <property type="evidence" value="ECO:0000250"/>
    <property type="project" value="UniProtKB"/>
</dbReference>
<dbReference type="GO" id="GO:0072013">
    <property type="term" value="P:glomus development"/>
    <property type="evidence" value="ECO:0000250"/>
    <property type="project" value="UniProtKB"/>
</dbReference>
<dbReference type="GO" id="GO:0045892">
    <property type="term" value="P:negative regulation of DNA-templated transcription"/>
    <property type="evidence" value="ECO:0000250"/>
    <property type="project" value="UniProtKB"/>
</dbReference>
<dbReference type="GO" id="GO:0000122">
    <property type="term" value="P:negative regulation of transcription by RNA polymerase II"/>
    <property type="evidence" value="ECO:0000250"/>
    <property type="project" value="UniProtKB"/>
</dbReference>
<dbReference type="GO" id="GO:0007219">
    <property type="term" value="P:Notch signaling pathway"/>
    <property type="evidence" value="ECO:0000250"/>
    <property type="project" value="UniProtKB"/>
</dbReference>
<dbReference type="GO" id="GO:0048793">
    <property type="term" value="P:pronephros development"/>
    <property type="evidence" value="ECO:0000250"/>
    <property type="project" value="UniProtKB"/>
</dbReference>
<dbReference type="GO" id="GO:0072082">
    <property type="term" value="P:specification of proximal tubule identity"/>
    <property type="evidence" value="ECO:0000250"/>
    <property type="project" value="UniProtKB"/>
</dbReference>
<dbReference type="FunFam" id="4.10.280.10:FF:000012">
    <property type="entry name" value="hairy/enhancer-of-split related with YRPW motif protein 1"/>
    <property type="match status" value="1"/>
</dbReference>
<dbReference type="Gene3D" id="6.10.250.980">
    <property type="match status" value="1"/>
</dbReference>
<dbReference type="Gene3D" id="4.10.280.10">
    <property type="entry name" value="Helix-loop-helix DNA-binding domain"/>
    <property type="match status" value="1"/>
</dbReference>
<dbReference type="InterPro" id="IPR011598">
    <property type="entry name" value="bHLH_dom"/>
</dbReference>
<dbReference type="InterPro" id="IPR050370">
    <property type="entry name" value="HES_HEY"/>
</dbReference>
<dbReference type="InterPro" id="IPR036638">
    <property type="entry name" value="HLH_DNA-bd_sf"/>
</dbReference>
<dbReference type="InterPro" id="IPR003650">
    <property type="entry name" value="Orange_dom"/>
</dbReference>
<dbReference type="PANTHER" id="PTHR10985">
    <property type="entry name" value="BASIC HELIX-LOOP-HELIX TRANSCRIPTION FACTOR, HES-RELATED"/>
    <property type="match status" value="1"/>
</dbReference>
<dbReference type="Pfam" id="PF07527">
    <property type="entry name" value="Hairy_orange"/>
    <property type="match status" value="1"/>
</dbReference>
<dbReference type="Pfam" id="PF00010">
    <property type="entry name" value="HLH"/>
    <property type="match status" value="1"/>
</dbReference>
<dbReference type="SMART" id="SM00353">
    <property type="entry name" value="HLH"/>
    <property type="match status" value="1"/>
</dbReference>
<dbReference type="SMART" id="SM00511">
    <property type="entry name" value="ORANGE"/>
    <property type="match status" value="1"/>
</dbReference>
<dbReference type="SUPFAM" id="SSF47459">
    <property type="entry name" value="HLH, helix-loop-helix DNA-binding domain"/>
    <property type="match status" value="1"/>
</dbReference>
<dbReference type="SUPFAM" id="SSF158457">
    <property type="entry name" value="Orange domain-like"/>
    <property type="match status" value="1"/>
</dbReference>
<dbReference type="PROSITE" id="PS50888">
    <property type="entry name" value="BHLH"/>
    <property type="match status" value="1"/>
</dbReference>
<dbReference type="PROSITE" id="PS51054">
    <property type="entry name" value="ORANGE"/>
    <property type="match status" value="1"/>
</dbReference>
<gene>
    <name type="primary">hey1</name>
    <name type="ORF">TEgg037i08.1</name>
</gene>
<accession>Q66KK8</accession>
<sequence>MKRGHDYSSSDSELDENIEVEKESADENGNLSSAAGSMSPSTSSQILARKRRRGIIEKRRRDRINNSLSELRRLVPSAFEKQGSAKLEKAEILQMTVDHLKMLHTAGGKGYFDAHALAMDYRSLGFRECLAEVARYLSIIEGMDTTDPLRVRLVSHLNNYASQREAANTAHTGIGHIPWGGTFAHHPHLSHPLLLAQTAHTSANSTSSSTEAHHQNRLPGSPHAETSSLRVPPNGNIASVLPVVASSKLSPPLLSSMASLSAFPFSFGSFHLLSPNSLSPTTPTPSGKPYRPWGTEIGAF</sequence>
<organism>
    <name type="scientific">Xenopus tropicalis</name>
    <name type="common">Western clawed frog</name>
    <name type="synonym">Silurana tropicalis</name>
    <dbReference type="NCBI Taxonomy" id="8364"/>
    <lineage>
        <taxon>Eukaryota</taxon>
        <taxon>Metazoa</taxon>
        <taxon>Chordata</taxon>
        <taxon>Craniata</taxon>
        <taxon>Vertebrata</taxon>
        <taxon>Euteleostomi</taxon>
        <taxon>Amphibia</taxon>
        <taxon>Batrachia</taxon>
        <taxon>Anura</taxon>
        <taxon>Pipoidea</taxon>
        <taxon>Pipidae</taxon>
        <taxon>Xenopodinae</taxon>
        <taxon>Xenopus</taxon>
        <taxon>Silurana</taxon>
    </lineage>
</organism>
<feature type="chain" id="PRO_0000286427" description="Hairy/enhancer-of-split related with YRPW motif protein 1">
    <location>
        <begin position="1"/>
        <end position="300"/>
    </location>
</feature>
<feature type="domain" description="bHLH" evidence="5">
    <location>
        <begin position="48"/>
        <end position="103"/>
    </location>
</feature>
<feature type="domain" description="Orange" evidence="4">
    <location>
        <begin position="121"/>
        <end position="157"/>
    </location>
</feature>
<feature type="region of interest" description="Disordered" evidence="6">
    <location>
        <begin position="1"/>
        <end position="52"/>
    </location>
</feature>
<feature type="region of interest" description="Disordered" evidence="6">
    <location>
        <begin position="199"/>
        <end position="232"/>
    </location>
</feature>
<feature type="region of interest" description="Disordered" evidence="6">
    <location>
        <begin position="278"/>
        <end position="300"/>
    </location>
</feature>
<feature type="short sequence motif" description="YRPW motif">
    <location>
        <begin position="290"/>
        <end position="293"/>
    </location>
</feature>
<feature type="compositionally biased region" description="Low complexity" evidence="6">
    <location>
        <begin position="32"/>
        <end position="44"/>
    </location>
</feature>
<feature type="compositionally biased region" description="Low complexity" evidence="6">
    <location>
        <begin position="199"/>
        <end position="210"/>
    </location>
</feature>
<evidence type="ECO:0000250" key="1"/>
<evidence type="ECO:0000250" key="2">
    <source>
        <dbReference type="UniProtKB" id="Q9I8A3"/>
    </source>
</evidence>
<evidence type="ECO:0000250" key="3">
    <source>
        <dbReference type="UniProtKB" id="Q9WV93"/>
    </source>
</evidence>
<evidence type="ECO:0000255" key="4">
    <source>
        <dbReference type="PROSITE-ProRule" id="PRU00380"/>
    </source>
</evidence>
<evidence type="ECO:0000255" key="5">
    <source>
        <dbReference type="PROSITE-ProRule" id="PRU00981"/>
    </source>
</evidence>
<evidence type="ECO:0000256" key="6">
    <source>
        <dbReference type="SAM" id="MobiDB-lite"/>
    </source>
</evidence>
<evidence type="ECO:0000305" key="7"/>
<comment type="function">
    <text evidence="2 3">Downstream effector of Notch signaling. Transcriptional repressor which binds preferentially to the canonical E box sequence 5'-CACGTG-3'. Acts as a suppressor of neurogenesis by antagonizing proneural gene function. Functions during floorplate development. Plays a role in pronephros formation in the inhibition of distal tubule and duct cell fates and the promotion of glomus and proximal tubule formation (By similarity).</text>
</comment>
<comment type="subunit">
    <text evidence="1">Efficient DNA binding requires dimerization with another bHLH protein. Binds DNA in the form of homodimer or more strongly as a heterodimer with hes1/hairy1 or hes4/hairy2b. Also weakly interacts with the bHLH proteins hes2, neurod1 and neurod4/ath3. Interacts (via Orange domain) with ccdc89/boip (via C-terminus) (By similarity).</text>
</comment>
<comment type="subcellular location">
    <subcellularLocation>
        <location evidence="4 5">Nucleus</location>
    </subcellularLocation>
</comment>
<comment type="domain">
    <text evidence="1">The Orange domain, downstream sequence and the bHLH are required for efficient heterodimerization with hes/hairy proteins, and for transcriptional repressor activity.</text>
</comment>
<comment type="domain">
    <text evidence="1">The C-terminal YRPW motif is not required for transcriptional repressor activity and is unable to recruit groucho.</text>
</comment>
<comment type="similarity">
    <text evidence="7">Belongs to the HEY family.</text>
</comment>
<protein>
    <recommendedName>
        <fullName>Hairy/enhancer-of-split related with YRPW motif protein 1</fullName>
    </recommendedName>
</protein>
<keyword id="KW-0217">Developmental protein</keyword>
<keyword id="KW-0238">DNA-binding</keyword>
<keyword id="KW-0914">Notch signaling pathway</keyword>
<keyword id="KW-0539">Nucleus</keyword>
<keyword id="KW-1185">Reference proteome</keyword>
<keyword id="KW-0678">Repressor</keyword>
<keyword id="KW-0804">Transcription</keyword>
<keyword id="KW-0805">Transcription regulation</keyword>
<name>HEY1_XENTR</name>
<reference key="1">
    <citation type="submission" date="2006-10" db="EMBL/GenBank/DDBJ databases">
        <authorList>
            <consortium name="Sanger Xenopus tropicalis EST/cDNA project"/>
        </authorList>
    </citation>
    <scope>NUCLEOTIDE SEQUENCE [LARGE SCALE MRNA]</scope>
    <source>
        <tissue>Egg</tissue>
    </source>
</reference>
<reference key="2">
    <citation type="submission" date="2004-08" db="EMBL/GenBank/DDBJ databases">
        <authorList>
            <consortium name="NIH - Xenopus Gene Collection (XGC) project"/>
        </authorList>
    </citation>
    <scope>NUCLEOTIDE SEQUENCE [LARGE SCALE MRNA]</scope>
    <source>
        <tissue>Tail bud</tissue>
    </source>
</reference>
<proteinExistence type="evidence at transcript level"/>